<accession>B1IBZ6</accession>
<comment type="catalytic activity">
    <reaction evidence="1">
        <text>aldehydo-D-galactose 6-phosphate = keto-D-tagatose 6-phosphate</text>
        <dbReference type="Rhea" id="RHEA:13033"/>
        <dbReference type="ChEBI" id="CHEBI:58255"/>
        <dbReference type="ChEBI" id="CHEBI:134283"/>
        <dbReference type="EC" id="5.3.1.26"/>
    </reaction>
</comment>
<comment type="pathway">
    <text evidence="1">Carbohydrate metabolism; D-galactose 6-phosphate degradation; D-tagatose 6-phosphate from D-galactose 6-phosphate: step 1/1.</text>
</comment>
<comment type="subunit">
    <text evidence="1">Heteromultimeric protein consisting of LacA and LacB.</text>
</comment>
<comment type="similarity">
    <text evidence="1">Belongs to the LacAB/RpiB family.</text>
</comment>
<protein>
    <recommendedName>
        <fullName evidence="1">Galactose-6-phosphate isomerase subunit LacB</fullName>
        <ecNumber evidence="1">5.3.1.26</ecNumber>
    </recommendedName>
</protein>
<feature type="chain" id="PRO_1000147087" description="Galactose-6-phosphate isomerase subunit LacB">
    <location>
        <begin position="1"/>
        <end position="171"/>
    </location>
</feature>
<keyword id="KW-0413">Isomerase</keyword>
<keyword id="KW-0423">Lactose metabolism</keyword>
<gene>
    <name evidence="1" type="primary">lacB</name>
    <name type="ordered locus">SPH_1310</name>
</gene>
<dbReference type="EC" id="5.3.1.26" evidence="1"/>
<dbReference type="EMBL" id="CP000936">
    <property type="protein sequence ID" value="ACA37220.1"/>
    <property type="molecule type" value="Genomic_DNA"/>
</dbReference>
<dbReference type="RefSeq" id="WP_001216910.1">
    <property type="nucleotide sequence ID" value="NC_010380.1"/>
</dbReference>
<dbReference type="SMR" id="B1IBZ6"/>
<dbReference type="KEGG" id="spv:SPH_1310"/>
<dbReference type="HOGENOM" id="CLU_091396_2_0_9"/>
<dbReference type="UniPathway" id="UPA00702">
    <property type="reaction ID" value="UER00714"/>
</dbReference>
<dbReference type="Proteomes" id="UP000002163">
    <property type="component" value="Chromosome"/>
</dbReference>
<dbReference type="GO" id="GO:0050044">
    <property type="term" value="F:galactose-6-phosphate isomerase activity"/>
    <property type="evidence" value="ECO:0007669"/>
    <property type="project" value="UniProtKB-UniRule"/>
</dbReference>
<dbReference type="GO" id="GO:0004751">
    <property type="term" value="F:ribose-5-phosphate isomerase activity"/>
    <property type="evidence" value="ECO:0007669"/>
    <property type="project" value="TreeGrafter"/>
</dbReference>
<dbReference type="GO" id="GO:0019316">
    <property type="term" value="P:D-allose catabolic process"/>
    <property type="evidence" value="ECO:0007669"/>
    <property type="project" value="TreeGrafter"/>
</dbReference>
<dbReference type="GO" id="GO:0019388">
    <property type="term" value="P:galactose catabolic process"/>
    <property type="evidence" value="ECO:0007669"/>
    <property type="project" value="UniProtKB-UniPathway"/>
</dbReference>
<dbReference type="GO" id="GO:0019512">
    <property type="term" value="P:lactose catabolic process via tagatose-6-phosphate"/>
    <property type="evidence" value="ECO:0007669"/>
    <property type="project" value="UniProtKB-UniRule"/>
</dbReference>
<dbReference type="GO" id="GO:0009052">
    <property type="term" value="P:pentose-phosphate shunt, non-oxidative branch"/>
    <property type="evidence" value="ECO:0007669"/>
    <property type="project" value="TreeGrafter"/>
</dbReference>
<dbReference type="Gene3D" id="3.40.1400.10">
    <property type="entry name" value="Sugar-phosphate isomerase, RpiB/LacA/LacB"/>
    <property type="match status" value="1"/>
</dbReference>
<dbReference type="HAMAP" id="MF_01556">
    <property type="entry name" value="LacB"/>
    <property type="match status" value="1"/>
</dbReference>
<dbReference type="InterPro" id="IPR004784">
    <property type="entry name" value="LacB"/>
</dbReference>
<dbReference type="InterPro" id="IPR003500">
    <property type="entry name" value="RpiB_LacA_LacB"/>
</dbReference>
<dbReference type="InterPro" id="IPR036569">
    <property type="entry name" value="RpiB_LacA_LacB_sf"/>
</dbReference>
<dbReference type="NCBIfam" id="TIGR01119">
    <property type="entry name" value="lacB"/>
    <property type="match status" value="1"/>
</dbReference>
<dbReference type="NCBIfam" id="NF004051">
    <property type="entry name" value="PRK05571.1"/>
    <property type="match status" value="1"/>
</dbReference>
<dbReference type="NCBIfam" id="NF006381">
    <property type="entry name" value="PRK08622.1"/>
    <property type="match status" value="1"/>
</dbReference>
<dbReference type="NCBIfam" id="NF009258">
    <property type="entry name" value="PRK12615.1"/>
    <property type="match status" value="1"/>
</dbReference>
<dbReference type="NCBIfam" id="TIGR00689">
    <property type="entry name" value="rpiB_lacA_lacB"/>
    <property type="match status" value="1"/>
</dbReference>
<dbReference type="PANTHER" id="PTHR30345:SF0">
    <property type="entry name" value="DNA DAMAGE-REPAIR_TOLERATION PROTEIN DRT102"/>
    <property type="match status" value="1"/>
</dbReference>
<dbReference type="PANTHER" id="PTHR30345">
    <property type="entry name" value="RIBOSE-5-PHOSPHATE ISOMERASE B"/>
    <property type="match status" value="1"/>
</dbReference>
<dbReference type="Pfam" id="PF02502">
    <property type="entry name" value="LacAB_rpiB"/>
    <property type="match status" value="1"/>
</dbReference>
<dbReference type="PIRSF" id="PIRSF005384">
    <property type="entry name" value="RpiB_LacA_B"/>
    <property type="match status" value="1"/>
</dbReference>
<dbReference type="SUPFAM" id="SSF89623">
    <property type="entry name" value="Ribose/Galactose isomerase RpiB/AlsB"/>
    <property type="match status" value="1"/>
</dbReference>
<proteinExistence type="inferred from homology"/>
<organism>
    <name type="scientific">Streptococcus pneumoniae (strain Hungary19A-6)</name>
    <dbReference type="NCBI Taxonomy" id="487214"/>
    <lineage>
        <taxon>Bacteria</taxon>
        <taxon>Bacillati</taxon>
        <taxon>Bacillota</taxon>
        <taxon>Bacilli</taxon>
        <taxon>Lactobacillales</taxon>
        <taxon>Streptococcaceae</taxon>
        <taxon>Streptococcus</taxon>
    </lineage>
</organism>
<sequence length="171" mass="18958">MRIAIGCDHIVTDEKMAVSEFLKSKGYEVIDFGTYDHTRTHYPIFGKKVGEAVTSGQADLGVCICGTGVGINNAVNKVPGVRSALVRDMTTALYAKEQLNANVIGFGGKITGELLMCDIIEAFIHAEYKPSEENKKLIAKIEHLESHNAQQTDANFFTEFLEKWDRGEYHD</sequence>
<evidence type="ECO:0000255" key="1">
    <source>
        <dbReference type="HAMAP-Rule" id="MF_01556"/>
    </source>
</evidence>
<name>LACB_STRPI</name>
<reference key="1">
    <citation type="journal article" date="2010" name="Genome Biol.">
        <title>Structure and dynamics of the pan-genome of Streptococcus pneumoniae and closely related species.</title>
        <authorList>
            <person name="Donati C."/>
            <person name="Hiller N.L."/>
            <person name="Tettelin H."/>
            <person name="Muzzi A."/>
            <person name="Croucher N.J."/>
            <person name="Angiuoli S.V."/>
            <person name="Oggioni M."/>
            <person name="Dunning Hotopp J.C."/>
            <person name="Hu F.Z."/>
            <person name="Riley D.R."/>
            <person name="Covacci A."/>
            <person name="Mitchell T.J."/>
            <person name="Bentley S.D."/>
            <person name="Kilian M."/>
            <person name="Ehrlich G.D."/>
            <person name="Rappuoli R."/>
            <person name="Moxon E.R."/>
            <person name="Masignani V."/>
        </authorList>
    </citation>
    <scope>NUCLEOTIDE SEQUENCE [LARGE SCALE GENOMIC DNA]</scope>
    <source>
        <strain>Hungary19A-6</strain>
    </source>
</reference>